<reference key="1">
    <citation type="journal article" date="1991" name="Mol. Gen. Genet.">
        <title>Characterisation of saporin genes: in vitro expression and ribosome inactivation.</title>
        <authorList>
            <person name="Fordham-Skelton A.P."/>
            <person name="Taylor P.E."/>
            <person name="Hartley M.R."/>
            <person name="Croy R.R.D."/>
        </authorList>
    </citation>
    <scope>NUCLEOTIDE SEQUENCE [GENOMIC DNA]</scope>
</reference>
<reference key="2">
    <citation type="journal article" date="1993" name="J. Biol. Chem.">
        <title>The expression of saporin, a ribosome-inactivating protein from the plant Saponaria officinalis, in Escherichia coli.</title>
        <authorList>
            <person name="Barthelemy I."/>
            <person name="Martineau D."/>
            <person name="Ong M."/>
            <person name="Matsunami R."/>
            <person name="Ling N."/>
            <person name="Benatti L."/>
            <person name="Cavallaro U."/>
            <person name="Soria M."/>
            <person name="Lappi D.A."/>
        </authorList>
    </citation>
    <scope>NUCLEOTIDE SEQUENCE [GENOMIC DNA] OF 25-284</scope>
    <source>
        <tissue>Leaf</tissue>
    </source>
</reference>
<reference key="3">
    <citation type="journal article" date="1993" name="Biochim. Biophys. Acta">
        <title>Distribution and properties of major ribosome-inactivating proteins (28 S rRNA N-glycosidases) of the plant Saponaria officinalis L. (Caryophyllaceae).</title>
        <authorList>
            <person name="Ferreras J.M."/>
            <person name="Barbieri L."/>
            <person name="Girbes T."/>
            <person name="Battelli M.G."/>
            <person name="Rojo M.A."/>
            <person name="Arias F.J."/>
            <person name="Rocher M.A."/>
            <person name="Soriano F."/>
            <person name="Mendez E."/>
            <person name="Stirpe F."/>
        </authorList>
    </citation>
    <scope>PROTEIN SEQUENCE OF 25-54</scope>
</reference>
<protein>
    <recommendedName>
        <fullName>Ribosome-inactivating protein saporin-2</fullName>
        <shortName>SAP-2</shortName>
        <shortName>SO-2</shortName>
        <ecNumber>3.2.2.22</ecNumber>
    </recommendedName>
    <alternativeName>
        <fullName>rRNA N-glycosidase</fullName>
    </alternativeName>
</protein>
<accession>P27559</accession>
<accession>Q41390</accession>
<accession>Q9SAP5</accession>
<evidence type="ECO:0000250" key="1"/>
<evidence type="ECO:0000269" key="2">
    <source>
    </source>
</evidence>
<evidence type="ECO:0000305" key="3"/>
<organism>
    <name type="scientific">Saponaria officinalis</name>
    <name type="common">Common soapwort</name>
    <name type="synonym">Lychnis saponaria</name>
    <dbReference type="NCBI Taxonomy" id="3572"/>
    <lineage>
        <taxon>Eukaryota</taxon>
        <taxon>Viridiplantae</taxon>
        <taxon>Streptophyta</taxon>
        <taxon>Embryophyta</taxon>
        <taxon>Tracheophyta</taxon>
        <taxon>Spermatophyta</taxon>
        <taxon>Magnoliopsida</taxon>
        <taxon>eudicotyledons</taxon>
        <taxon>Gunneridae</taxon>
        <taxon>Pentapetalae</taxon>
        <taxon>Caryophyllales</taxon>
        <taxon>Caryophyllaceae</taxon>
        <taxon>Caryophylleae</taxon>
        <taxon>Saponaria</taxon>
    </lineage>
</organism>
<feature type="signal peptide" evidence="2">
    <location>
        <begin position="1"/>
        <end position="24"/>
    </location>
</feature>
<feature type="chain" id="PRO_0000030774" description="Ribosome-inactivating protein saporin-2">
    <location>
        <begin position="25"/>
        <end position="292"/>
    </location>
</feature>
<feature type="active site" evidence="1">
    <location>
        <position position="200"/>
    </location>
</feature>
<feature type="sequence variant">
    <original>D</original>
    <variation>E</variation>
    <location>
        <position position="72"/>
    </location>
</feature>
<comment type="function">
    <text>Ribosome-inactivating protein of type 1, inhibits protein synthesis in animal cells. Useful as immunotoxin for pharmacological applications.</text>
</comment>
<comment type="catalytic activity">
    <reaction>
        <text>Endohydrolysis of the N-glycosidic bond at one specific adenosine on the 28S rRNA.</text>
        <dbReference type="EC" id="3.2.2.22"/>
    </reaction>
</comment>
<comment type="similarity">
    <text evidence="3">Belongs to the ribosome-inactivating protein family. Type 1 RIP subfamily.</text>
</comment>
<proteinExistence type="evidence at protein level"/>
<gene>
    <name type="primary">SAP2</name>
</gene>
<keyword id="KW-0903">Direct protein sequencing</keyword>
<keyword id="KW-0378">Hydrolase</keyword>
<keyword id="KW-0611">Plant defense</keyword>
<keyword id="KW-0652">Protein synthesis inhibitor</keyword>
<keyword id="KW-0732">Signal</keyword>
<keyword id="KW-0800">Toxin</keyword>
<sequence length="292" mass="32811">MKIYVVATIAWILLQFSAWTTTDAVTSITLDLVNPTAGQYSSFVDKIRNNVKDPNLKYGGTDIAVIGPPSKDKFLRINFQSSRGTVSLGLKRDNLYVVAYLAMDNTNVNRAYYFKSEITSAELTALFPEATTANQKALEYTEDYQSIEKNAQITQGDKSRKELGLGIDLLLTFMEAVNKKARVVKNEARFLLIAIQMTAEVARFRYIQNLVTKNFPNKFDSDNKVIQFEVSWRKISTAIYGDAKNGVFNKDYDFGFGKVRQVKDLQMGLLMYLGKPKSSNEANSTAYATTVL</sequence>
<name>RIP2_SAPOF</name>
<dbReference type="EC" id="3.2.2.22"/>
<dbReference type="EMBL" id="X59255">
    <property type="protein sequence ID" value="CAA41948.1"/>
    <property type="molecule type" value="Genomic_DNA"/>
</dbReference>
<dbReference type="EMBL" id="X69132">
    <property type="protein sequence ID" value="CAA48886.1"/>
    <property type="molecule type" value="Genomic_DNA"/>
</dbReference>
<dbReference type="EMBL" id="X69133">
    <property type="protein sequence ID" value="CAA48887.1"/>
    <property type="molecule type" value="Genomic_DNA"/>
</dbReference>
<dbReference type="PIR" id="S16487">
    <property type="entry name" value="S16487"/>
</dbReference>
<dbReference type="PIR" id="S17933">
    <property type="entry name" value="RLQHG2"/>
</dbReference>
<dbReference type="PIR" id="S38527">
    <property type="entry name" value="S38527"/>
</dbReference>
<dbReference type="SMR" id="P27559"/>
<dbReference type="Allergome" id="2805">
    <property type="allergen name" value="Sap o RIP"/>
</dbReference>
<dbReference type="GO" id="GO:0030598">
    <property type="term" value="F:rRNA N-glycosylase activity"/>
    <property type="evidence" value="ECO:0007669"/>
    <property type="project" value="UniProtKB-EC"/>
</dbReference>
<dbReference type="GO" id="GO:0090729">
    <property type="term" value="F:toxin activity"/>
    <property type="evidence" value="ECO:0007669"/>
    <property type="project" value="UniProtKB-KW"/>
</dbReference>
<dbReference type="GO" id="GO:0006952">
    <property type="term" value="P:defense response"/>
    <property type="evidence" value="ECO:0007669"/>
    <property type="project" value="UniProtKB-KW"/>
</dbReference>
<dbReference type="GO" id="GO:0017148">
    <property type="term" value="P:negative regulation of translation"/>
    <property type="evidence" value="ECO:0007669"/>
    <property type="project" value="UniProtKB-KW"/>
</dbReference>
<dbReference type="Gene3D" id="3.40.420.10">
    <property type="entry name" value="Ricin (A subunit), domain 1"/>
    <property type="match status" value="1"/>
</dbReference>
<dbReference type="Gene3D" id="4.10.470.10">
    <property type="entry name" value="Ricin (A Subunit), domain 2"/>
    <property type="match status" value="1"/>
</dbReference>
<dbReference type="InterPro" id="IPR036041">
    <property type="entry name" value="Ribosome-inact_prot_sf"/>
</dbReference>
<dbReference type="InterPro" id="IPR017989">
    <property type="entry name" value="Ribosome_inactivat_1/2"/>
</dbReference>
<dbReference type="InterPro" id="IPR001574">
    <property type="entry name" value="Ribosome_inactivat_prot"/>
</dbReference>
<dbReference type="InterPro" id="IPR017988">
    <property type="entry name" value="Ribosome_inactivat_prot_CS"/>
</dbReference>
<dbReference type="InterPro" id="IPR016138">
    <property type="entry name" value="Ribosome_inactivat_prot_sub1"/>
</dbReference>
<dbReference type="InterPro" id="IPR016139">
    <property type="entry name" value="Ribosome_inactivat_prot_sub2"/>
</dbReference>
<dbReference type="PANTHER" id="PTHR33453">
    <property type="match status" value="1"/>
</dbReference>
<dbReference type="PANTHER" id="PTHR33453:SF34">
    <property type="entry name" value="RIBOSOME-INACTIVATING PROTEIN"/>
    <property type="match status" value="1"/>
</dbReference>
<dbReference type="Pfam" id="PF00161">
    <property type="entry name" value="RIP"/>
    <property type="match status" value="1"/>
</dbReference>
<dbReference type="PRINTS" id="PR00396">
    <property type="entry name" value="SHIGARICIN"/>
</dbReference>
<dbReference type="SUPFAM" id="SSF56371">
    <property type="entry name" value="Ribosome inactivating proteins (RIP)"/>
    <property type="match status" value="1"/>
</dbReference>
<dbReference type="PROSITE" id="PS00275">
    <property type="entry name" value="SHIGA_RICIN"/>
    <property type="match status" value="1"/>
</dbReference>